<accession>B7V3I5</accession>
<reference key="1">
    <citation type="journal article" date="2009" name="Genome Res.">
        <title>Newly introduced genomic prophage islands are critical determinants of in vivo competitiveness in the Liverpool epidemic strain of Pseudomonas aeruginosa.</title>
        <authorList>
            <person name="Winstanley C."/>
            <person name="Langille M.G.I."/>
            <person name="Fothergill J.L."/>
            <person name="Kukavica-Ibrulj I."/>
            <person name="Paradis-Bleau C."/>
            <person name="Sanschagrin F."/>
            <person name="Thomson N.R."/>
            <person name="Winsor G.L."/>
            <person name="Quail M.A."/>
            <person name="Lennard N."/>
            <person name="Bignell A."/>
            <person name="Clarke L."/>
            <person name="Seeger K."/>
            <person name="Saunders D."/>
            <person name="Harris D."/>
            <person name="Parkhill J."/>
            <person name="Hancock R.E.W."/>
            <person name="Brinkman F.S.L."/>
            <person name="Levesque R.C."/>
        </authorList>
    </citation>
    <scope>NUCLEOTIDE SEQUENCE [LARGE SCALE GENOMIC DNA]</scope>
    <source>
        <strain>LESB58</strain>
    </source>
</reference>
<protein>
    <recommendedName>
        <fullName evidence="1">Imidazolonepropionase</fullName>
        <ecNumber evidence="1">3.5.2.7</ecNumber>
    </recommendedName>
    <alternativeName>
        <fullName evidence="1">Imidazolone-5-propionate hydrolase</fullName>
    </alternativeName>
</protein>
<feature type="chain" id="PRO_1000121548" description="Imidazolonepropionase">
    <location>
        <begin position="1"/>
        <end position="402"/>
    </location>
</feature>
<feature type="binding site" evidence="1">
    <location>
        <position position="66"/>
    </location>
    <ligand>
        <name>Fe(3+)</name>
        <dbReference type="ChEBI" id="CHEBI:29034"/>
    </ligand>
</feature>
<feature type="binding site" evidence="1">
    <location>
        <position position="66"/>
    </location>
    <ligand>
        <name>Zn(2+)</name>
        <dbReference type="ChEBI" id="CHEBI:29105"/>
    </ligand>
</feature>
<feature type="binding site" evidence="1">
    <location>
        <position position="68"/>
    </location>
    <ligand>
        <name>Fe(3+)</name>
        <dbReference type="ChEBI" id="CHEBI:29034"/>
    </ligand>
</feature>
<feature type="binding site" evidence="1">
    <location>
        <position position="68"/>
    </location>
    <ligand>
        <name>Zn(2+)</name>
        <dbReference type="ChEBI" id="CHEBI:29105"/>
    </ligand>
</feature>
<feature type="binding site" evidence="1">
    <location>
        <position position="75"/>
    </location>
    <ligand>
        <name>4-imidazolone-5-propanoate</name>
        <dbReference type="ChEBI" id="CHEBI:77893"/>
    </ligand>
</feature>
<feature type="binding site" evidence="1">
    <location>
        <position position="138"/>
    </location>
    <ligand>
        <name>4-imidazolone-5-propanoate</name>
        <dbReference type="ChEBI" id="CHEBI:77893"/>
    </ligand>
</feature>
<feature type="binding site" evidence="1">
    <location>
        <position position="138"/>
    </location>
    <ligand>
        <name>N-formimidoyl-L-glutamate</name>
        <dbReference type="ChEBI" id="CHEBI:58928"/>
    </ligand>
</feature>
<feature type="binding site" evidence="1">
    <location>
        <position position="171"/>
    </location>
    <ligand>
        <name>4-imidazolone-5-propanoate</name>
        <dbReference type="ChEBI" id="CHEBI:77893"/>
    </ligand>
</feature>
<feature type="binding site" evidence="1">
    <location>
        <position position="236"/>
    </location>
    <ligand>
        <name>Fe(3+)</name>
        <dbReference type="ChEBI" id="CHEBI:29034"/>
    </ligand>
</feature>
<feature type="binding site" evidence="1">
    <location>
        <position position="236"/>
    </location>
    <ligand>
        <name>Zn(2+)</name>
        <dbReference type="ChEBI" id="CHEBI:29105"/>
    </ligand>
</feature>
<feature type="binding site" evidence="1">
    <location>
        <position position="239"/>
    </location>
    <ligand>
        <name>4-imidazolone-5-propanoate</name>
        <dbReference type="ChEBI" id="CHEBI:77893"/>
    </ligand>
</feature>
<feature type="binding site" evidence="1">
    <location>
        <position position="311"/>
    </location>
    <ligand>
        <name>Fe(3+)</name>
        <dbReference type="ChEBI" id="CHEBI:29034"/>
    </ligand>
</feature>
<feature type="binding site" evidence="1">
    <location>
        <position position="311"/>
    </location>
    <ligand>
        <name>Zn(2+)</name>
        <dbReference type="ChEBI" id="CHEBI:29105"/>
    </ligand>
</feature>
<feature type="binding site" evidence="1">
    <location>
        <position position="313"/>
    </location>
    <ligand>
        <name>N-formimidoyl-L-glutamate</name>
        <dbReference type="ChEBI" id="CHEBI:58928"/>
    </ligand>
</feature>
<feature type="binding site" evidence="1">
    <location>
        <position position="315"/>
    </location>
    <ligand>
        <name>N-formimidoyl-L-glutamate</name>
        <dbReference type="ChEBI" id="CHEBI:58928"/>
    </ligand>
</feature>
<feature type="binding site" evidence="1">
    <location>
        <position position="316"/>
    </location>
    <ligand>
        <name>4-imidazolone-5-propanoate</name>
        <dbReference type="ChEBI" id="CHEBI:77893"/>
    </ligand>
</feature>
<evidence type="ECO:0000255" key="1">
    <source>
        <dbReference type="HAMAP-Rule" id="MF_00372"/>
    </source>
</evidence>
<organism>
    <name type="scientific">Pseudomonas aeruginosa (strain LESB58)</name>
    <dbReference type="NCBI Taxonomy" id="557722"/>
    <lineage>
        <taxon>Bacteria</taxon>
        <taxon>Pseudomonadati</taxon>
        <taxon>Pseudomonadota</taxon>
        <taxon>Gammaproteobacteria</taxon>
        <taxon>Pseudomonadales</taxon>
        <taxon>Pseudomonadaceae</taxon>
        <taxon>Pseudomonas</taxon>
    </lineage>
</organism>
<sequence>MKRLWQHCHAATLKGGKYSIVEDAALVTDGPLIHWIGPRAELPPGDYAERIDLGGAWLTPGLIDCHTHAVFGGNRSGEFEQRLEGVSYAVIAAAGGGIASTVRATREASEEELLASARKRLEPLLRDGVTALEIKSGYGLDLASERKMLRVIRRLGERLPATVRSTCLAAHALPPEYAGRADDYIEHICSTMLPALAGEGLVDAVDAFCEHLAFSPAQVERVFIAARELGLPVKLHAEQLSSLHGSSLAARYRALSADHLEYMTEDDARAMGEAGTVAVLLPGAFYLLRETQLPPIDALRRHGVAMAIASDLNPGTSPALSLRLMLNMACTLFRLTPEETLAGVTLHAARALGLEASHGSLEVGKLADFVAWDIERPAELAYWLGGDLPKRVIRHAEEVYRG</sequence>
<comment type="function">
    <text evidence="1">Catalyzes the hydrolytic cleavage of the carbon-nitrogen bond in imidazolone-5-propanoate to yield N-formimidoyl-L-glutamate. It is the third step in the universal histidine degradation pathway.</text>
</comment>
<comment type="catalytic activity">
    <reaction evidence="1">
        <text>4-imidazolone-5-propanoate + H2O = N-formimidoyl-L-glutamate</text>
        <dbReference type="Rhea" id="RHEA:23660"/>
        <dbReference type="ChEBI" id="CHEBI:15377"/>
        <dbReference type="ChEBI" id="CHEBI:58928"/>
        <dbReference type="ChEBI" id="CHEBI:77893"/>
        <dbReference type="EC" id="3.5.2.7"/>
    </reaction>
</comment>
<comment type="cofactor">
    <cofactor evidence="1">
        <name>Zn(2+)</name>
        <dbReference type="ChEBI" id="CHEBI:29105"/>
    </cofactor>
    <cofactor evidence="1">
        <name>Fe(3+)</name>
        <dbReference type="ChEBI" id="CHEBI:29034"/>
    </cofactor>
    <text evidence="1">Binds 1 zinc or iron ion per subunit.</text>
</comment>
<comment type="pathway">
    <text evidence="1">Amino-acid degradation; L-histidine degradation into L-glutamate; N-formimidoyl-L-glutamate from L-histidine: step 3/3.</text>
</comment>
<comment type="subcellular location">
    <subcellularLocation>
        <location evidence="1">Cytoplasm</location>
    </subcellularLocation>
</comment>
<comment type="similarity">
    <text evidence="1">Belongs to the metallo-dependent hydrolases superfamily. HutI family.</text>
</comment>
<dbReference type="EC" id="3.5.2.7" evidence="1"/>
<dbReference type="EMBL" id="FM209186">
    <property type="protein sequence ID" value="CAW30236.1"/>
    <property type="molecule type" value="Genomic_DNA"/>
</dbReference>
<dbReference type="RefSeq" id="WP_012614637.1">
    <property type="nucleotide sequence ID" value="NC_011770.1"/>
</dbReference>
<dbReference type="SMR" id="B7V3I5"/>
<dbReference type="KEGG" id="pag:PLES_54821"/>
<dbReference type="HOGENOM" id="CLU_041647_0_0_6"/>
<dbReference type="UniPathway" id="UPA00379">
    <property type="reaction ID" value="UER00551"/>
</dbReference>
<dbReference type="GO" id="GO:0005737">
    <property type="term" value="C:cytoplasm"/>
    <property type="evidence" value="ECO:0007669"/>
    <property type="project" value="UniProtKB-SubCell"/>
</dbReference>
<dbReference type="GO" id="GO:0050480">
    <property type="term" value="F:imidazolonepropionase activity"/>
    <property type="evidence" value="ECO:0007669"/>
    <property type="project" value="UniProtKB-UniRule"/>
</dbReference>
<dbReference type="GO" id="GO:0005506">
    <property type="term" value="F:iron ion binding"/>
    <property type="evidence" value="ECO:0007669"/>
    <property type="project" value="UniProtKB-UniRule"/>
</dbReference>
<dbReference type="GO" id="GO:0008270">
    <property type="term" value="F:zinc ion binding"/>
    <property type="evidence" value="ECO:0007669"/>
    <property type="project" value="UniProtKB-UniRule"/>
</dbReference>
<dbReference type="GO" id="GO:0019556">
    <property type="term" value="P:L-histidine catabolic process to glutamate and formamide"/>
    <property type="evidence" value="ECO:0007669"/>
    <property type="project" value="UniProtKB-UniPathway"/>
</dbReference>
<dbReference type="GO" id="GO:0019557">
    <property type="term" value="P:L-histidine catabolic process to glutamate and formate"/>
    <property type="evidence" value="ECO:0007669"/>
    <property type="project" value="UniProtKB-UniPathway"/>
</dbReference>
<dbReference type="CDD" id="cd01296">
    <property type="entry name" value="Imidazolone-5PH"/>
    <property type="match status" value="1"/>
</dbReference>
<dbReference type="FunFam" id="3.20.20.140:FF:000007">
    <property type="entry name" value="Imidazolonepropionase"/>
    <property type="match status" value="1"/>
</dbReference>
<dbReference type="Gene3D" id="3.20.20.140">
    <property type="entry name" value="Metal-dependent hydrolases"/>
    <property type="match status" value="1"/>
</dbReference>
<dbReference type="Gene3D" id="2.30.40.10">
    <property type="entry name" value="Urease, subunit C, domain 1"/>
    <property type="match status" value="1"/>
</dbReference>
<dbReference type="HAMAP" id="MF_00372">
    <property type="entry name" value="HutI"/>
    <property type="match status" value="1"/>
</dbReference>
<dbReference type="InterPro" id="IPR006680">
    <property type="entry name" value="Amidohydro-rel"/>
</dbReference>
<dbReference type="InterPro" id="IPR005920">
    <property type="entry name" value="HutI"/>
</dbReference>
<dbReference type="InterPro" id="IPR011059">
    <property type="entry name" value="Metal-dep_hydrolase_composite"/>
</dbReference>
<dbReference type="InterPro" id="IPR032466">
    <property type="entry name" value="Metal_Hydrolase"/>
</dbReference>
<dbReference type="NCBIfam" id="TIGR01224">
    <property type="entry name" value="hutI"/>
    <property type="match status" value="1"/>
</dbReference>
<dbReference type="PANTHER" id="PTHR42752">
    <property type="entry name" value="IMIDAZOLONEPROPIONASE"/>
    <property type="match status" value="1"/>
</dbReference>
<dbReference type="PANTHER" id="PTHR42752:SF1">
    <property type="entry name" value="IMIDAZOLONEPROPIONASE-RELATED"/>
    <property type="match status" value="1"/>
</dbReference>
<dbReference type="Pfam" id="PF01979">
    <property type="entry name" value="Amidohydro_1"/>
    <property type="match status" value="1"/>
</dbReference>
<dbReference type="SUPFAM" id="SSF51338">
    <property type="entry name" value="Composite domain of metallo-dependent hydrolases"/>
    <property type="match status" value="1"/>
</dbReference>
<dbReference type="SUPFAM" id="SSF51556">
    <property type="entry name" value="Metallo-dependent hydrolases"/>
    <property type="match status" value="1"/>
</dbReference>
<gene>
    <name evidence="1" type="primary">hutI</name>
    <name type="ordered locus">PLES_54821</name>
</gene>
<name>HUTI_PSEA8</name>
<keyword id="KW-0963">Cytoplasm</keyword>
<keyword id="KW-0369">Histidine metabolism</keyword>
<keyword id="KW-0378">Hydrolase</keyword>
<keyword id="KW-0408">Iron</keyword>
<keyword id="KW-0479">Metal-binding</keyword>
<keyword id="KW-0862">Zinc</keyword>
<proteinExistence type="inferred from homology"/>